<keyword id="KW-0997">Cell inner membrane</keyword>
<keyword id="KW-1003">Cell membrane</keyword>
<keyword id="KW-0143">Chaperone</keyword>
<keyword id="KW-0472">Membrane</keyword>
<keyword id="KW-1185">Reference proteome</keyword>
<keyword id="KW-0812">Transmembrane</keyword>
<keyword id="KW-1133">Transmembrane helix</keyword>
<dbReference type="EMBL" id="AE014299">
    <property type="protein sequence ID" value="AAN56619.1"/>
    <property type="molecule type" value="Genomic_DNA"/>
</dbReference>
<dbReference type="RefSeq" id="NP_719175.1">
    <property type="nucleotide sequence ID" value="NC_004347.2"/>
</dbReference>
<dbReference type="RefSeq" id="WP_011073436.1">
    <property type="nucleotide sequence ID" value="NC_004347.2"/>
</dbReference>
<dbReference type="STRING" id="211586.SO_3633"/>
<dbReference type="PaxDb" id="211586-SO_3633"/>
<dbReference type="KEGG" id="son:SO_3633"/>
<dbReference type="PATRIC" id="fig|211586.12.peg.3522"/>
<dbReference type="eggNOG" id="COG1076">
    <property type="taxonomic scope" value="Bacteria"/>
</dbReference>
<dbReference type="HOGENOM" id="CLU_066221_1_0_6"/>
<dbReference type="OrthoDB" id="9782583at2"/>
<dbReference type="PhylomeDB" id="Q8EB99"/>
<dbReference type="BioCyc" id="SONE211586:G1GMP-3384-MONOMER"/>
<dbReference type="Proteomes" id="UP000008186">
    <property type="component" value="Chromosome"/>
</dbReference>
<dbReference type="GO" id="GO:0005886">
    <property type="term" value="C:plasma membrane"/>
    <property type="evidence" value="ECO:0007669"/>
    <property type="project" value="UniProtKB-SubCell"/>
</dbReference>
<dbReference type="GO" id="GO:0051087">
    <property type="term" value="F:protein-folding chaperone binding"/>
    <property type="evidence" value="ECO:0007669"/>
    <property type="project" value="InterPro"/>
</dbReference>
<dbReference type="CDD" id="cd06257">
    <property type="entry name" value="DnaJ"/>
    <property type="match status" value="1"/>
</dbReference>
<dbReference type="CDD" id="cd07316">
    <property type="entry name" value="terB_like_DjlA"/>
    <property type="match status" value="1"/>
</dbReference>
<dbReference type="FunFam" id="1.10.287.110:FF:000011">
    <property type="entry name" value="Co-chaperone protein DjlA"/>
    <property type="match status" value="1"/>
</dbReference>
<dbReference type="FunFam" id="1.10.3680.10:FF:000001">
    <property type="entry name" value="Co-chaperone protein DjlA"/>
    <property type="match status" value="1"/>
</dbReference>
<dbReference type="Gene3D" id="1.10.287.110">
    <property type="entry name" value="DnaJ domain"/>
    <property type="match status" value="1"/>
</dbReference>
<dbReference type="Gene3D" id="1.10.3680.10">
    <property type="entry name" value="TerB-like"/>
    <property type="match status" value="1"/>
</dbReference>
<dbReference type="HAMAP" id="MF_01153">
    <property type="entry name" value="DjlA"/>
    <property type="match status" value="1"/>
</dbReference>
<dbReference type="InterPro" id="IPR023749">
    <property type="entry name" value="DjlA"/>
</dbReference>
<dbReference type="InterPro" id="IPR050817">
    <property type="entry name" value="DjlA_DnaK_co-chaperone"/>
</dbReference>
<dbReference type="InterPro" id="IPR007791">
    <property type="entry name" value="DjlA_N"/>
</dbReference>
<dbReference type="InterPro" id="IPR001623">
    <property type="entry name" value="DnaJ_domain"/>
</dbReference>
<dbReference type="InterPro" id="IPR036869">
    <property type="entry name" value="J_dom_sf"/>
</dbReference>
<dbReference type="InterPro" id="IPR029024">
    <property type="entry name" value="TerB-like"/>
</dbReference>
<dbReference type="NCBIfam" id="NF006948">
    <property type="entry name" value="PRK09430.1"/>
    <property type="match status" value="1"/>
</dbReference>
<dbReference type="PANTHER" id="PTHR24074">
    <property type="entry name" value="CO-CHAPERONE PROTEIN DJLA"/>
    <property type="match status" value="1"/>
</dbReference>
<dbReference type="Pfam" id="PF00226">
    <property type="entry name" value="DnaJ"/>
    <property type="match status" value="1"/>
</dbReference>
<dbReference type="Pfam" id="PF05099">
    <property type="entry name" value="TerB"/>
    <property type="match status" value="1"/>
</dbReference>
<dbReference type="PRINTS" id="PR00625">
    <property type="entry name" value="JDOMAIN"/>
</dbReference>
<dbReference type="SMART" id="SM00271">
    <property type="entry name" value="DnaJ"/>
    <property type="match status" value="1"/>
</dbReference>
<dbReference type="SUPFAM" id="SSF46565">
    <property type="entry name" value="Chaperone J-domain"/>
    <property type="match status" value="1"/>
</dbReference>
<dbReference type="PROSITE" id="PS50076">
    <property type="entry name" value="DNAJ_2"/>
    <property type="match status" value="1"/>
</dbReference>
<reference key="1">
    <citation type="journal article" date="2002" name="Nat. Biotechnol.">
        <title>Genome sequence of the dissimilatory metal ion-reducing bacterium Shewanella oneidensis.</title>
        <authorList>
            <person name="Heidelberg J.F."/>
            <person name="Paulsen I.T."/>
            <person name="Nelson K.E."/>
            <person name="Gaidos E.J."/>
            <person name="Nelson W.C."/>
            <person name="Read T.D."/>
            <person name="Eisen J.A."/>
            <person name="Seshadri R."/>
            <person name="Ward N.L."/>
            <person name="Methe B.A."/>
            <person name="Clayton R.A."/>
            <person name="Meyer T."/>
            <person name="Tsapin A."/>
            <person name="Scott J."/>
            <person name="Beanan M.J."/>
            <person name="Brinkac L.M."/>
            <person name="Daugherty S.C."/>
            <person name="DeBoy R.T."/>
            <person name="Dodson R.J."/>
            <person name="Durkin A.S."/>
            <person name="Haft D.H."/>
            <person name="Kolonay J.F."/>
            <person name="Madupu R."/>
            <person name="Peterson J.D."/>
            <person name="Umayam L.A."/>
            <person name="White O."/>
            <person name="Wolf A.M."/>
            <person name="Vamathevan J.J."/>
            <person name="Weidman J.F."/>
            <person name="Impraim M."/>
            <person name="Lee K."/>
            <person name="Berry K.J."/>
            <person name="Lee C."/>
            <person name="Mueller J."/>
            <person name="Khouri H.M."/>
            <person name="Gill J."/>
            <person name="Utterback T.R."/>
            <person name="McDonald L.A."/>
            <person name="Feldblyum T.V."/>
            <person name="Smith H.O."/>
            <person name="Venter J.C."/>
            <person name="Nealson K.H."/>
            <person name="Fraser C.M."/>
        </authorList>
    </citation>
    <scope>NUCLEOTIDE SEQUENCE [LARGE SCALE GENOMIC DNA]</scope>
    <source>
        <strain>ATCC 700550 / JCM 31522 / CIP 106686 / LMG 19005 / NCIMB 14063 / MR-1</strain>
    </source>
</reference>
<name>DJLA_SHEON</name>
<protein>
    <recommendedName>
        <fullName evidence="1">Co-chaperone protein DjlA</fullName>
    </recommendedName>
</protein>
<sequence length="262" mass="29644">MRFWGKFFGFVIGFMFGRFFGALLGLWLGHLYDKRPGGGASFSQILGQAKNRQGIFFNTTFAVMGHVAKASGRVTETDIRIATLLMDQMRLTGDARKEAQQAFREGKEPDFDLCSSLQAFRAVTQGRQELVQMFIEIQIQTALSDGELDAAEHAILMTVAQELGYGRQQLDELLKRWQAEFRFHQTSSGNKTSITDAYHLLGITAEATDQEVKRAYRKLMNEHHPDKLVAKGLPPEMMEIANRKAQDIQAAYDRVKSERGMR</sequence>
<gene>
    <name evidence="1" type="primary">djlA</name>
    <name type="ordered locus">SO_3633</name>
</gene>
<proteinExistence type="inferred from homology"/>
<evidence type="ECO:0000255" key="1">
    <source>
        <dbReference type="HAMAP-Rule" id="MF_01153"/>
    </source>
</evidence>
<comment type="function">
    <text evidence="1">Regulatory DnaK co-chaperone. Direct interaction between DnaK and DjlA is needed for the induction of the wcaABCDE operon, involved in the synthesis of a colanic acid polysaccharide capsule, possibly through activation of the RcsB/RcsC phosphotransfer signaling pathway. The colanic acid capsule may help the bacterium survive conditions outside the host.</text>
</comment>
<comment type="subunit">
    <text evidence="1">Homodimer.</text>
</comment>
<comment type="subcellular location">
    <subcellularLocation>
        <location evidence="1">Cell inner membrane</location>
        <topology evidence="1">Single-pass type III membrane protein</topology>
    </subcellularLocation>
</comment>
<comment type="domain">
    <text evidence="1">The transmembrane domain is a dimerization domain.</text>
</comment>
<feature type="chain" id="PRO_0000209438" description="Co-chaperone protein DjlA">
    <location>
        <begin position="1"/>
        <end position="262"/>
    </location>
</feature>
<feature type="topological domain" description="Periplasmic" evidence="1">
    <location>
        <begin position="1"/>
        <end position="6"/>
    </location>
</feature>
<feature type="transmembrane region" description="Helical" evidence="1">
    <location>
        <begin position="7"/>
        <end position="30"/>
    </location>
</feature>
<feature type="topological domain" description="Cytoplasmic" evidence="1">
    <location>
        <begin position="31"/>
        <end position="262"/>
    </location>
</feature>
<feature type="domain" description="J" evidence="1">
    <location>
        <begin position="196"/>
        <end position="262"/>
    </location>
</feature>
<accession>Q8EB99</accession>
<organism>
    <name type="scientific">Shewanella oneidensis (strain ATCC 700550 / JCM 31522 / CIP 106686 / LMG 19005 / NCIMB 14063 / MR-1)</name>
    <dbReference type="NCBI Taxonomy" id="211586"/>
    <lineage>
        <taxon>Bacteria</taxon>
        <taxon>Pseudomonadati</taxon>
        <taxon>Pseudomonadota</taxon>
        <taxon>Gammaproteobacteria</taxon>
        <taxon>Alteromonadales</taxon>
        <taxon>Shewanellaceae</taxon>
        <taxon>Shewanella</taxon>
    </lineage>
</organism>